<comment type="function">
    <text evidence="1">Binds as a heterodimer with protein bS6 to the central domain of the 16S rRNA, where it helps stabilize the platform of the 30S subunit.</text>
</comment>
<comment type="subunit">
    <text evidence="1">Part of the 30S ribosomal subunit. Forms a tight heterodimer with protein bS6.</text>
</comment>
<comment type="similarity">
    <text evidence="1">Belongs to the bacterial ribosomal protein bS18 family.</text>
</comment>
<feature type="chain" id="PRO_1000003475" description="Small ribosomal subunit protein bS18">
    <location>
        <begin position="1"/>
        <end position="86"/>
    </location>
</feature>
<reference key="1">
    <citation type="submission" date="2006-12" db="EMBL/GenBank/DDBJ databases">
        <authorList>
            <person name="Fouts D.E."/>
            <person name="Nelson K.E."/>
            <person name="Sebastian Y."/>
        </authorList>
    </citation>
    <scope>NUCLEOTIDE SEQUENCE [LARGE SCALE GENOMIC DNA]</scope>
    <source>
        <strain>81-176</strain>
    </source>
</reference>
<organism>
    <name type="scientific">Campylobacter jejuni subsp. jejuni serotype O:23/36 (strain 81-176)</name>
    <dbReference type="NCBI Taxonomy" id="354242"/>
    <lineage>
        <taxon>Bacteria</taxon>
        <taxon>Pseudomonadati</taxon>
        <taxon>Campylobacterota</taxon>
        <taxon>Epsilonproteobacteria</taxon>
        <taxon>Campylobacterales</taxon>
        <taxon>Campylobacteraceae</taxon>
        <taxon>Campylobacter</taxon>
    </lineage>
</organism>
<evidence type="ECO:0000255" key="1">
    <source>
        <dbReference type="HAMAP-Rule" id="MF_00270"/>
    </source>
</evidence>
<evidence type="ECO:0000305" key="2"/>
<proteinExistence type="inferred from homology"/>
<dbReference type="EMBL" id="CP000538">
    <property type="protein sequence ID" value="EAQ72105.1"/>
    <property type="molecule type" value="Genomic_DNA"/>
</dbReference>
<dbReference type="RefSeq" id="WP_002853032.1">
    <property type="nucleotide sequence ID" value="NC_008787.1"/>
</dbReference>
<dbReference type="SMR" id="A1W059"/>
<dbReference type="KEGG" id="cjj:CJJ81176_1090"/>
<dbReference type="eggNOG" id="COG0238">
    <property type="taxonomic scope" value="Bacteria"/>
</dbReference>
<dbReference type="HOGENOM" id="CLU_148710_2_2_7"/>
<dbReference type="Proteomes" id="UP000000646">
    <property type="component" value="Chromosome"/>
</dbReference>
<dbReference type="GO" id="GO:0022627">
    <property type="term" value="C:cytosolic small ribosomal subunit"/>
    <property type="evidence" value="ECO:0007669"/>
    <property type="project" value="TreeGrafter"/>
</dbReference>
<dbReference type="GO" id="GO:0070181">
    <property type="term" value="F:small ribosomal subunit rRNA binding"/>
    <property type="evidence" value="ECO:0007669"/>
    <property type="project" value="TreeGrafter"/>
</dbReference>
<dbReference type="GO" id="GO:0003735">
    <property type="term" value="F:structural constituent of ribosome"/>
    <property type="evidence" value="ECO:0007669"/>
    <property type="project" value="InterPro"/>
</dbReference>
<dbReference type="GO" id="GO:0006412">
    <property type="term" value="P:translation"/>
    <property type="evidence" value="ECO:0007669"/>
    <property type="project" value="UniProtKB-UniRule"/>
</dbReference>
<dbReference type="FunFam" id="4.10.640.10:FF:000005">
    <property type="entry name" value="30S ribosomal protein S18"/>
    <property type="match status" value="1"/>
</dbReference>
<dbReference type="Gene3D" id="4.10.640.10">
    <property type="entry name" value="Ribosomal protein S18"/>
    <property type="match status" value="1"/>
</dbReference>
<dbReference type="HAMAP" id="MF_00270">
    <property type="entry name" value="Ribosomal_bS18"/>
    <property type="match status" value="1"/>
</dbReference>
<dbReference type="InterPro" id="IPR001648">
    <property type="entry name" value="Ribosomal_bS18"/>
</dbReference>
<dbReference type="InterPro" id="IPR036870">
    <property type="entry name" value="Ribosomal_bS18_sf"/>
</dbReference>
<dbReference type="NCBIfam" id="TIGR00165">
    <property type="entry name" value="S18"/>
    <property type="match status" value="1"/>
</dbReference>
<dbReference type="PANTHER" id="PTHR13479">
    <property type="entry name" value="30S RIBOSOMAL PROTEIN S18"/>
    <property type="match status" value="1"/>
</dbReference>
<dbReference type="PANTHER" id="PTHR13479:SF40">
    <property type="entry name" value="SMALL RIBOSOMAL SUBUNIT PROTEIN BS18M"/>
    <property type="match status" value="1"/>
</dbReference>
<dbReference type="Pfam" id="PF01084">
    <property type="entry name" value="Ribosomal_S18"/>
    <property type="match status" value="1"/>
</dbReference>
<dbReference type="PRINTS" id="PR00974">
    <property type="entry name" value="RIBOSOMALS18"/>
</dbReference>
<dbReference type="SUPFAM" id="SSF46911">
    <property type="entry name" value="Ribosomal protein S18"/>
    <property type="match status" value="1"/>
</dbReference>
<keyword id="KW-0687">Ribonucleoprotein</keyword>
<keyword id="KW-0689">Ribosomal protein</keyword>
<keyword id="KW-0694">RNA-binding</keyword>
<keyword id="KW-0699">rRNA-binding</keyword>
<protein>
    <recommendedName>
        <fullName evidence="1">Small ribosomal subunit protein bS18</fullName>
    </recommendedName>
    <alternativeName>
        <fullName evidence="2">30S ribosomal protein S18</fullName>
    </alternativeName>
</protein>
<accession>A1W059</accession>
<name>RS18_CAMJJ</name>
<gene>
    <name evidence="1" type="primary">rpsR</name>
    <name type="ordered locus">CJJ81176_1090</name>
</gene>
<sequence>MAEKRKYSRKYCKYTEAKVEFIDYKDTAMLKHALSERFKIMPRRLTGTSKKYQEMVEVAIKRARHVALIPYIVDRKEVINNPFEGL</sequence>